<comment type="function">
    <text evidence="1">Blocks Kv3 voltage-gated potassium channels. Reduces blood pressure.</text>
</comment>
<comment type="subcellular location">
    <subcellularLocation>
        <location evidence="6">Secreted</location>
    </subcellularLocation>
    <subcellularLocation>
        <location evidence="6">Nematocyst</location>
    </subcellularLocation>
</comment>
<comment type="tissue specificity">
    <text evidence="3">Moderately expressed in the ectodermal tissue from the distal and proximal tentacles, body wall, and oral disk.</text>
</comment>
<comment type="similarity">
    <text evidence="6">Belongs to the sea anemone type 3 (BDS) potassium channel toxin family.</text>
</comment>
<comment type="caution">
    <text evidence="6">Opinions are divided on whether Anemonia viridis (Forsskal, 1775) and Anemonia sulcata (Pennant, 1777) are separate species.</text>
</comment>
<keyword id="KW-0165">Cleavage on pair of basic residues</keyword>
<keyword id="KW-1015">Disulfide bond</keyword>
<keyword id="KW-0382">Hypotensive agent</keyword>
<keyword id="KW-0872">Ion channel impairing toxin</keyword>
<keyword id="KW-0166">Nematocyst</keyword>
<keyword id="KW-0528">Neurotoxin</keyword>
<keyword id="KW-0632">Potassium channel impairing toxin</keyword>
<keyword id="KW-0964">Secreted</keyword>
<keyword id="KW-0732">Signal</keyword>
<keyword id="KW-0800">Toxin</keyword>
<keyword id="KW-1220">Voltage-gated potassium channel impairing toxin</keyword>
<sequence length="76" mass="8357">MNKALFLCLVVLCAAVVFAAEDLQKAKHAPFKRAAPCFCSGKPGRGDLWILRGDCPGGYGYTSNCYKWPNICCYPH</sequence>
<dbReference type="EMBL" id="FK736435">
    <property type="status" value="NOT_ANNOTATED_CDS"/>
    <property type="molecule type" value="mRNA"/>
</dbReference>
<dbReference type="EMBL" id="FK729210">
    <property type="status" value="NOT_ANNOTATED_CDS"/>
    <property type="molecule type" value="mRNA"/>
</dbReference>
<dbReference type="EMBL" id="FK729786">
    <property type="status" value="NOT_ANNOTATED_CDS"/>
    <property type="molecule type" value="mRNA"/>
</dbReference>
<dbReference type="SMR" id="P0DMY1"/>
<dbReference type="GO" id="GO:0005576">
    <property type="term" value="C:extracellular region"/>
    <property type="evidence" value="ECO:0007669"/>
    <property type="project" value="UniProtKB-SubCell"/>
</dbReference>
<dbReference type="GO" id="GO:0042151">
    <property type="term" value="C:nematocyst"/>
    <property type="evidence" value="ECO:0007669"/>
    <property type="project" value="UniProtKB-SubCell"/>
</dbReference>
<dbReference type="GO" id="GO:0008200">
    <property type="term" value="F:ion channel inhibitor activity"/>
    <property type="evidence" value="ECO:0007669"/>
    <property type="project" value="InterPro"/>
</dbReference>
<dbReference type="GO" id="GO:0015459">
    <property type="term" value="F:potassium channel regulator activity"/>
    <property type="evidence" value="ECO:0007669"/>
    <property type="project" value="UniProtKB-KW"/>
</dbReference>
<dbReference type="GO" id="GO:0090729">
    <property type="term" value="F:toxin activity"/>
    <property type="evidence" value="ECO:0007669"/>
    <property type="project" value="UniProtKB-KW"/>
</dbReference>
<dbReference type="GO" id="GO:0008217">
    <property type="term" value="P:regulation of blood pressure"/>
    <property type="evidence" value="ECO:0007669"/>
    <property type="project" value="UniProtKB-KW"/>
</dbReference>
<dbReference type="Gene3D" id="2.20.20.10">
    <property type="entry name" value="Anthopleurin-A"/>
    <property type="match status" value="1"/>
</dbReference>
<dbReference type="InterPro" id="IPR012414">
    <property type="entry name" value="BDS_K_chnl_tox"/>
</dbReference>
<dbReference type="InterPro" id="IPR023355">
    <property type="entry name" value="Myo_ane_neurotoxin_sf"/>
</dbReference>
<dbReference type="Pfam" id="PF07936">
    <property type="entry name" value="Defensin_4"/>
    <property type="match status" value="1"/>
</dbReference>
<dbReference type="SUPFAM" id="SSF57392">
    <property type="entry name" value="Defensin-like"/>
    <property type="match status" value="1"/>
</dbReference>
<proteinExistence type="evidence at transcript level"/>
<protein>
    <recommendedName>
        <fullName evidence="5">Kappa-actitoxin-Avd4g</fullName>
        <shortName evidence="5">Kappa-AITX-Avd4g</shortName>
    </recommendedName>
    <alternativeName>
        <fullName>Antihypertensive protein BDS-7</fullName>
    </alternativeName>
    <alternativeName>
        <fullName evidence="4">Blood depressing substance 7</fullName>
        <shortName evidence="4">BDS-7</shortName>
    </alternativeName>
</protein>
<evidence type="ECO:0000250" key="1">
    <source>
        <dbReference type="UniProtKB" id="P11494"/>
    </source>
</evidence>
<evidence type="ECO:0000255" key="2"/>
<evidence type="ECO:0000269" key="3">
    <source>
    </source>
</evidence>
<evidence type="ECO:0000303" key="4">
    <source>
    </source>
</evidence>
<evidence type="ECO:0000303" key="5">
    <source>
    </source>
</evidence>
<evidence type="ECO:0000305" key="6"/>
<reference key="1">
    <citation type="journal article" date="2009" name="BMC Genomics">
        <title>Comprehensive EST analysis of the symbiotic sea anemone, Anemonia viridis.</title>
        <authorList>
            <person name="Sabourault C."/>
            <person name="Ganot P."/>
            <person name="Deleury E."/>
            <person name="Allemand D."/>
            <person name="Furla P."/>
        </authorList>
    </citation>
    <scope>NUCLEOTIDE SEQUENCE [MRNA]</scope>
</reference>
<reference key="2">
    <citation type="journal article" date="2011" name="BMC Genomics">
        <title>The mining of toxin-like polypeptides from EST database by single residue distribution analysis.</title>
        <authorList>
            <person name="Kozlov S."/>
            <person name="Grishin E."/>
        </authorList>
    </citation>
    <scope>NOMENCLATURE</scope>
</reference>
<reference key="3">
    <citation type="journal article" date="2012" name="Toxicon">
        <title>Development of a rational nomenclature for naming peptide and protein toxins from sea anemones.</title>
        <authorList>
            <person name="Oliveira J.S."/>
            <person name="Fuentes-Silva D."/>
            <person name="King G.F."/>
        </authorList>
    </citation>
    <scope>NOMENCLATURE</scope>
</reference>
<reference key="4">
    <citation type="journal article" date="2013" name="Mar. Drugs">
        <title>Evidence of accelerated evolution and ectodermal-specific expression of presumptive BDS toxin cDNAs from Anemonia viridis.</title>
        <authorList>
            <person name="Nicosia A."/>
            <person name="Maggio T."/>
            <person name="Mazzola S."/>
            <person name="Cuttitta A."/>
        </authorList>
    </citation>
    <scope>3D-STRUCTURE MODELING</scope>
    <scope>TISSUE SPECIFICITY</scope>
</reference>
<organism>
    <name type="scientific">Anemonia viridis</name>
    <name type="common">Snakelocks anemone</name>
    <dbReference type="NCBI Taxonomy" id="51769"/>
    <lineage>
        <taxon>Eukaryota</taxon>
        <taxon>Metazoa</taxon>
        <taxon>Cnidaria</taxon>
        <taxon>Anthozoa</taxon>
        <taxon>Hexacorallia</taxon>
        <taxon>Actiniaria</taxon>
        <taxon>Actiniidae</taxon>
        <taxon>Anemonia</taxon>
    </lineage>
</organism>
<name>BDS7_ANEVI</name>
<accession>P0DMY1</accession>
<feature type="signal peptide" evidence="2">
    <location>
        <begin position="1"/>
        <end position="19"/>
    </location>
</feature>
<feature type="propeptide" id="PRO_0000433658" evidence="1">
    <location>
        <begin position="20"/>
        <end position="31"/>
    </location>
</feature>
<feature type="chain" id="PRO_0000433659" description="Kappa-actitoxin-Avd4g">
    <location>
        <begin position="34"/>
        <end position="76"/>
    </location>
</feature>
<feature type="disulfide bond" evidence="1">
    <location>
        <begin position="37"/>
        <end position="72"/>
    </location>
</feature>
<feature type="disulfide bond" evidence="1">
    <location>
        <begin position="39"/>
        <end position="65"/>
    </location>
</feature>
<feature type="disulfide bond" evidence="1">
    <location>
        <begin position="55"/>
        <end position="73"/>
    </location>
</feature>